<protein>
    <recommendedName>
        <fullName evidence="6">PH, RCC1 and FYVE domains-containing protein 1</fullName>
    </recommendedName>
    <alternativeName>
        <fullName evidence="7">Protein Praf4</fullName>
    </alternativeName>
</protein>
<keyword id="KW-0175">Coiled coil</keyword>
<keyword id="KW-0344">Guanine-nucleotide releasing factor</keyword>
<keyword id="KW-0446">Lipid-binding</keyword>
<keyword id="KW-0479">Metal-binding</keyword>
<keyword id="KW-1185">Reference proteome</keyword>
<keyword id="KW-0677">Repeat</keyword>
<keyword id="KW-0862">Zinc</keyword>
<keyword id="KW-0863">Zinc-finger</keyword>
<sequence length="1103" mass="120395">MADLVTYSNADHNLEQALITLKKGTQLLKYGRKGKPKFYPFRLSSDEKSLIWISSSGEKRLKLASVSKIVPGQRTAVFQRYLRPEKDYLSFSLLYNGKKKSLDLICKDKVEAEIWIGGLKTLISTGQGGRSKIDGWSGGGLSVDASRELTSSSPSSSSASASRGHSSPGTPFNIDPITSPKSAEPEVPPTDSEKSHVALDNKNMQTKVSGSDGFRVSVSSAQSSSSHGSAADDSDALGDVYIWGEVICDNVVKVGIDKNASYLTTRTDVLVPKPLESNIVLDVHQIACGVRHAAFVTRQGEIFTWGEESGGRLGHGIGKDVFHPRLVESLTATSSVDFVACGEFHTCAVTLAGELYTWGDGTHNVGLLGHGSDISHWIPKRIAGSLEGLHVASVSCGPWHTALITSYGRLFTFGDGTFGVLGHGDKETVQYPREVESLSGLRTIAVSCGVWHTAAVVEIIVTQSNSSSVSSGKLFTWGDGDKNRLGHGDKDPRLKPTCVPALIDYNFHKIACGHSLTVGLTTSGQVFTMGSTVYGQLGNLQTDGKLPCLVEDKLASEFVEEISCGAYHVAALTSRNEVYTWGKGANGRLGHGDLEDRKVPTIVEALKDRHVKYIACGSNYTAAICLHKWVSGAEQSQCSTCRLAFGFTRKRHNCYNCGLVHCHSCSSKKAFRAALAPSAGRLYRVCDSCYVKLSKVSEINDTNRRNSAVPRLSGENRDRLDKSEIRLAKFGTSNMDLIKQLDSKAAKQGKKTDTFSLGRNSQLPSLLQLKDAVQSNIGDMRRATPKLAQAPSGISSRSVSPFSRRSSPPRSATPMPSTSGLYFPVGIADNMKKTNEILNQEIVKLRTQVDSLTQKCEFQEVELQNSVKKTQEALALAEEESAKSRAAKEAIKSLIAQLKDVAEKLPPGESVKLACLQNGLDQNGFHFPEENGFHPSRSESMTSSISSVAPFDFAFANASWSNLQSPKQTPRASERNSNAYPADPRLSSSGSVISERIEPFQFQNNSDNGSSQTGVNNTNQVEAEWIEQYEPGVYITLVALHDGTRDLRRVRFSRRRFGEHQAETWWSENREKVYEKYNVRVSEKSTASQTHRDRDEEEEDIPH</sequence>
<gene>
    <name evidence="6" type="primary">PRAF1</name>
    <name evidence="7" type="synonym">PRAF4</name>
    <name evidence="9" type="ordered locus">At1g76950</name>
    <name evidence="10" type="ORF">F22K20.5</name>
</gene>
<proteinExistence type="evidence at protein level"/>
<name>PRAF1_ARATH</name>
<accession>Q947D2</accession>
<accession>O49281</accession>
<accession>Q56WW7</accession>
<accession>Q8W111</accession>
<organism>
    <name type="scientific">Arabidopsis thaliana</name>
    <name type="common">Mouse-ear cress</name>
    <dbReference type="NCBI Taxonomy" id="3702"/>
    <lineage>
        <taxon>Eukaryota</taxon>
        <taxon>Viridiplantae</taxon>
        <taxon>Streptophyta</taxon>
        <taxon>Embryophyta</taxon>
        <taxon>Tracheophyta</taxon>
        <taxon>Spermatophyta</taxon>
        <taxon>Magnoliopsida</taxon>
        <taxon>eudicotyledons</taxon>
        <taxon>Gunneridae</taxon>
        <taxon>Pentapetalae</taxon>
        <taxon>rosids</taxon>
        <taxon>malvids</taxon>
        <taxon>Brassicales</taxon>
        <taxon>Brassicaceae</taxon>
        <taxon>Camelineae</taxon>
        <taxon>Arabidopsis</taxon>
    </lineage>
</organism>
<reference key="1">
    <citation type="journal article" date="2001" name="Biochem. J.">
        <title>FYVE zinc-finger proteins in the plant model Arabidopsis thaliana: identification of PtdIns3P-binding residues by comparison of classic and variant FYVE domains.</title>
        <authorList>
            <person name="Jensen R.B."/>
            <person name="La Cour T."/>
            <person name="Albrethsen J."/>
            <person name="Nielsen M."/>
            <person name="Skriver K."/>
        </authorList>
    </citation>
    <scope>NUCLEOTIDE SEQUENCE [MRNA]</scope>
    <scope>FUNCTION</scope>
    <scope>MUTAGENESIS OF 653-ASN--LYS-655</scope>
    <scope>TISSUE SPECIFICITY</scope>
</reference>
<reference key="2">
    <citation type="journal article" date="2000" name="Nature">
        <title>Sequence and analysis of chromosome 1 of the plant Arabidopsis thaliana.</title>
        <authorList>
            <person name="Theologis A."/>
            <person name="Ecker J.R."/>
            <person name="Palm C.J."/>
            <person name="Federspiel N.A."/>
            <person name="Kaul S."/>
            <person name="White O."/>
            <person name="Alonso J."/>
            <person name="Altafi H."/>
            <person name="Araujo R."/>
            <person name="Bowman C.L."/>
            <person name="Brooks S.Y."/>
            <person name="Buehler E."/>
            <person name="Chan A."/>
            <person name="Chao Q."/>
            <person name="Chen H."/>
            <person name="Cheuk R.F."/>
            <person name="Chin C.W."/>
            <person name="Chung M.K."/>
            <person name="Conn L."/>
            <person name="Conway A.B."/>
            <person name="Conway A.R."/>
            <person name="Creasy T.H."/>
            <person name="Dewar K."/>
            <person name="Dunn P."/>
            <person name="Etgu P."/>
            <person name="Feldblyum T.V."/>
            <person name="Feng J.-D."/>
            <person name="Fong B."/>
            <person name="Fujii C.Y."/>
            <person name="Gill J.E."/>
            <person name="Goldsmith A.D."/>
            <person name="Haas B."/>
            <person name="Hansen N.F."/>
            <person name="Hughes B."/>
            <person name="Huizar L."/>
            <person name="Hunter J.L."/>
            <person name="Jenkins J."/>
            <person name="Johnson-Hopson C."/>
            <person name="Khan S."/>
            <person name="Khaykin E."/>
            <person name="Kim C.J."/>
            <person name="Koo H.L."/>
            <person name="Kremenetskaia I."/>
            <person name="Kurtz D.B."/>
            <person name="Kwan A."/>
            <person name="Lam B."/>
            <person name="Langin-Hooper S."/>
            <person name="Lee A."/>
            <person name="Lee J.M."/>
            <person name="Lenz C.A."/>
            <person name="Li J.H."/>
            <person name="Li Y.-P."/>
            <person name="Lin X."/>
            <person name="Liu S.X."/>
            <person name="Liu Z.A."/>
            <person name="Luros J.S."/>
            <person name="Maiti R."/>
            <person name="Marziali A."/>
            <person name="Militscher J."/>
            <person name="Miranda M."/>
            <person name="Nguyen M."/>
            <person name="Nierman W.C."/>
            <person name="Osborne B.I."/>
            <person name="Pai G."/>
            <person name="Peterson J."/>
            <person name="Pham P.K."/>
            <person name="Rizzo M."/>
            <person name="Rooney T."/>
            <person name="Rowley D."/>
            <person name="Sakano H."/>
            <person name="Salzberg S.L."/>
            <person name="Schwartz J.R."/>
            <person name="Shinn P."/>
            <person name="Southwick A.M."/>
            <person name="Sun H."/>
            <person name="Tallon L.J."/>
            <person name="Tambunga G."/>
            <person name="Toriumi M.J."/>
            <person name="Town C.D."/>
            <person name="Utterback T."/>
            <person name="Van Aken S."/>
            <person name="Vaysberg M."/>
            <person name="Vysotskaia V.S."/>
            <person name="Walker M."/>
            <person name="Wu D."/>
            <person name="Yu G."/>
            <person name="Fraser C.M."/>
            <person name="Venter J.C."/>
            <person name="Davis R.W."/>
        </authorList>
    </citation>
    <scope>NUCLEOTIDE SEQUENCE [LARGE SCALE GENOMIC DNA]</scope>
    <source>
        <strain>cv. Columbia</strain>
    </source>
</reference>
<reference key="3">
    <citation type="journal article" date="2017" name="Plant J.">
        <title>Araport11: a complete reannotation of the Arabidopsis thaliana reference genome.</title>
        <authorList>
            <person name="Cheng C.Y."/>
            <person name="Krishnakumar V."/>
            <person name="Chan A.P."/>
            <person name="Thibaud-Nissen F."/>
            <person name="Schobel S."/>
            <person name="Town C.D."/>
        </authorList>
    </citation>
    <scope>GENOME REANNOTATION</scope>
    <source>
        <strain>cv. Columbia</strain>
    </source>
</reference>
<reference key="4">
    <citation type="journal article" date="2003" name="Science">
        <title>Empirical analysis of transcriptional activity in the Arabidopsis genome.</title>
        <authorList>
            <person name="Yamada K."/>
            <person name="Lim J."/>
            <person name="Dale J.M."/>
            <person name="Chen H."/>
            <person name="Shinn P."/>
            <person name="Palm C.J."/>
            <person name="Southwick A.M."/>
            <person name="Wu H.C."/>
            <person name="Kim C.J."/>
            <person name="Nguyen M."/>
            <person name="Pham P.K."/>
            <person name="Cheuk R.F."/>
            <person name="Karlin-Newmann G."/>
            <person name="Liu S.X."/>
            <person name="Lam B."/>
            <person name="Sakano H."/>
            <person name="Wu T."/>
            <person name="Yu G."/>
            <person name="Miranda M."/>
            <person name="Quach H.L."/>
            <person name="Tripp M."/>
            <person name="Chang C.H."/>
            <person name="Lee J.M."/>
            <person name="Toriumi M.J."/>
            <person name="Chan M.M."/>
            <person name="Tang C.C."/>
            <person name="Onodera C.S."/>
            <person name="Deng J.M."/>
            <person name="Akiyama K."/>
            <person name="Ansari Y."/>
            <person name="Arakawa T."/>
            <person name="Banh J."/>
            <person name="Banno F."/>
            <person name="Bowser L."/>
            <person name="Brooks S.Y."/>
            <person name="Carninci P."/>
            <person name="Chao Q."/>
            <person name="Choy N."/>
            <person name="Enju A."/>
            <person name="Goldsmith A.D."/>
            <person name="Gurjal M."/>
            <person name="Hansen N.F."/>
            <person name="Hayashizaki Y."/>
            <person name="Johnson-Hopson C."/>
            <person name="Hsuan V.W."/>
            <person name="Iida K."/>
            <person name="Karnes M."/>
            <person name="Khan S."/>
            <person name="Koesema E."/>
            <person name="Ishida J."/>
            <person name="Jiang P.X."/>
            <person name="Jones T."/>
            <person name="Kawai J."/>
            <person name="Kamiya A."/>
            <person name="Meyers C."/>
            <person name="Nakajima M."/>
            <person name="Narusaka M."/>
            <person name="Seki M."/>
            <person name="Sakurai T."/>
            <person name="Satou M."/>
            <person name="Tamse R."/>
            <person name="Vaysberg M."/>
            <person name="Wallender E.K."/>
            <person name="Wong C."/>
            <person name="Yamamura Y."/>
            <person name="Yuan S."/>
            <person name="Shinozaki K."/>
            <person name="Davis R.W."/>
            <person name="Theologis A."/>
            <person name="Ecker J.R."/>
        </authorList>
    </citation>
    <scope>NUCLEOTIDE SEQUENCE [LARGE SCALE MRNA]</scope>
    <source>
        <strain>cv. Columbia</strain>
    </source>
</reference>
<reference key="5">
    <citation type="submission" date="2005-03" db="EMBL/GenBank/DDBJ databases">
        <title>Large-scale analysis of RIKEN Arabidopsis full-length (RAFL) cDNAs.</title>
        <authorList>
            <person name="Totoki Y."/>
            <person name="Seki M."/>
            <person name="Ishida J."/>
            <person name="Nakajima M."/>
            <person name="Enju A."/>
            <person name="Kamiya A."/>
            <person name="Narusaka M."/>
            <person name="Shin-i T."/>
            <person name="Nakagawa M."/>
            <person name="Sakamoto N."/>
            <person name="Oishi K."/>
            <person name="Kohara Y."/>
            <person name="Kobayashi M."/>
            <person name="Toyoda A."/>
            <person name="Sakaki Y."/>
            <person name="Sakurai T."/>
            <person name="Iida K."/>
            <person name="Akiyama K."/>
            <person name="Satou M."/>
            <person name="Toyoda T."/>
            <person name="Konagaya A."/>
            <person name="Carninci P."/>
            <person name="Kawai J."/>
            <person name="Hayashizaki Y."/>
            <person name="Shinozaki K."/>
        </authorList>
    </citation>
    <scope>NUCLEOTIDE SEQUENCE [LARGE SCALE MRNA] OF 909-1103</scope>
    <source>
        <strain>cv. Columbia</strain>
    </source>
</reference>
<reference key="6">
    <citation type="journal article" date="2004" name="Trends Plant Sci.">
        <title>Learning the lipid language of plant signalling.</title>
        <authorList>
            <person name="van Leeuwen W."/>
            <person name="Oekresz L."/>
            <person name="Boegre L."/>
            <person name="Munnik T."/>
        </authorList>
    </citation>
    <scope>GENE FAMILY</scope>
</reference>
<reference key="7">
    <citation type="journal article" date="2010" name="BMC Plant Biol.">
        <title>Identification and structural characterization of FYVE domain-containing proteins of Arabidopsis thaliana.</title>
        <authorList>
            <person name="Wywial E."/>
            <person name="Singh S.M."/>
        </authorList>
    </citation>
    <scope>GENE FAMILY</scope>
</reference>
<comment type="function">
    <text evidence="5">Binds to phosphatidic acid and to phosphoinositides such as PtdIns3P, PtdIns(3,4)P(2), PtdIns(3,4,5)P(3) and PtdIns(4,5)P(2). Catalyzes guanine nucleotide exchange on specific Rab proteins.</text>
</comment>
<comment type="tissue specificity">
    <text evidence="5">Mostly expressed in flowers, and, to a lower extent, in stems, leaves, siliques, seeds.</text>
</comment>
<comment type="sequence caution" evidence="8">
    <conflict type="erroneous gene model prediction">
        <sequence resource="EMBL-CDS" id="AAC00618"/>
    </conflict>
</comment>
<evidence type="ECO:0000255" key="1"/>
<evidence type="ECO:0000255" key="2">
    <source>
        <dbReference type="PROSITE-ProRule" id="PRU00091"/>
    </source>
</evidence>
<evidence type="ECO:0000255" key="3">
    <source>
        <dbReference type="PROSITE-ProRule" id="PRU00847"/>
    </source>
</evidence>
<evidence type="ECO:0000256" key="4">
    <source>
        <dbReference type="SAM" id="MobiDB-lite"/>
    </source>
</evidence>
<evidence type="ECO:0000269" key="5">
    <source>
    </source>
</evidence>
<evidence type="ECO:0000303" key="6">
    <source>
    </source>
</evidence>
<evidence type="ECO:0000303" key="7">
    <source>
    </source>
</evidence>
<evidence type="ECO:0000305" key="8"/>
<evidence type="ECO:0000312" key="9">
    <source>
        <dbReference type="Araport" id="AT1G76950"/>
    </source>
</evidence>
<evidence type="ECO:0000312" key="10">
    <source>
        <dbReference type="EMBL" id="AAC00618.1"/>
    </source>
</evidence>
<dbReference type="EMBL" id="AF323270">
    <property type="protein sequence ID" value="AAL08940.1"/>
    <property type="molecule type" value="mRNA"/>
</dbReference>
<dbReference type="EMBL" id="AC002291">
    <property type="protein sequence ID" value="AAC00618.1"/>
    <property type="status" value="ALT_SEQ"/>
    <property type="molecule type" value="Genomic_DNA"/>
</dbReference>
<dbReference type="EMBL" id="CP002684">
    <property type="protein sequence ID" value="AEE35908.1"/>
    <property type="molecule type" value="Genomic_DNA"/>
</dbReference>
<dbReference type="EMBL" id="AF462811">
    <property type="protein sequence ID" value="AAL58903.1"/>
    <property type="molecule type" value="mRNA"/>
</dbReference>
<dbReference type="EMBL" id="BT002726">
    <property type="protein sequence ID" value="AAO11642.1"/>
    <property type="molecule type" value="mRNA"/>
</dbReference>
<dbReference type="EMBL" id="AK221913">
    <property type="protein sequence ID" value="BAD94309.1"/>
    <property type="molecule type" value="mRNA"/>
</dbReference>
<dbReference type="PIR" id="D96798">
    <property type="entry name" value="D96798"/>
</dbReference>
<dbReference type="RefSeq" id="NP_565144.1">
    <property type="nucleotide sequence ID" value="NM_106346.3"/>
</dbReference>
<dbReference type="SMR" id="Q947D2"/>
<dbReference type="FunCoup" id="Q947D2">
    <property type="interactions" value="1091"/>
</dbReference>
<dbReference type="STRING" id="3702.Q947D2"/>
<dbReference type="iPTMnet" id="Q947D2"/>
<dbReference type="PaxDb" id="3702-AT1G76950.1"/>
<dbReference type="ProteomicsDB" id="226495"/>
<dbReference type="EnsemblPlants" id="AT1G76950.1">
    <property type="protein sequence ID" value="AT1G76950.1"/>
    <property type="gene ID" value="AT1G76950"/>
</dbReference>
<dbReference type="GeneID" id="844030"/>
<dbReference type="Gramene" id="AT1G76950.1">
    <property type="protein sequence ID" value="AT1G76950.1"/>
    <property type="gene ID" value="AT1G76950"/>
</dbReference>
<dbReference type="KEGG" id="ath:AT1G76950"/>
<dbReference type="Araport" id="AT1G76950"/>
<dbReference type="TAIR" id="AT1G76950">
    <property type="gene designation" value="PRAF1"/>
</dbReference>
<dbReference type="eggNOG" id="ENOG502QT6C">
    <property type="taxonomic scope" value="Eukaryota"/>
</dbReference>
<dbReference type="HOGENOM" id="CLU_005343_0_0_1"/>
<dbReference type="InParanoid" id="Q947D2"/>
<dbReference type="OMA" id="ACNVDFV"/>
<dbReference type="OrthoDB" id="5981550at2759"/>
<dbReference type="PhylomeDB" id="Q947D2"/>
<dbReference type="PRO" id="PR:Q947D2"/>
<dbReference type="Proteomes" id="UP000006548">
    <property type="component" value="Chromosome 1"/>
</dbReference>
<dbReference type="ExpressionAtlas" id="Q947D2">
    <property type="expression patterns" value="baseline and differential"/>
</dbReference>
<dbReference type="GO" id="GO:0005085">
    <property type="term" value="F:guanyl-nucleotide exchange factor activity"/>
    <property type="evidence" value="ECO:0000314"/>
    <property type="project" value="UniProtKB"/>
</dbReference>
<dbReference type="GO" id="GO:0070300">
    <property type="term" value="F:phosphatidic acid binding"/>
    <property type="evidence" value="ECO:0000314"/>
    <property type="project" value="UniProtKB"/>
</dbReference>
<dbReference type="GO" id="GO:0035091">
    <property type="term" value="F:phosphatidylinositol binding"/>
    <property type="evidence" value="ECO:0000314"/>
    <property type="project" value="UniProtKB"/>
</dbReference>
<dbReference type="GO" id="GO:0008270">
    <property type="term" value="F:zinc ion binding"/>
    <property type="evidence" value="ECO:0007669"/>
    <property type="project" value="UniProtKB-KW"/>
</dbReference>
<dbReference type="CDD" id="cd00065">
    <property type="entry name" value="FYVE_like_SF"/>
    <property type="match status" value="1"/>
</dbReference>
<dbReference type="CDD" id="cd13365">
    <property type="entry name" value="PH_PLC_plant-like"/>
    <property type="match status" value="1"/>
</dbReference>
<dbReference type="FunFam" id="2.130.10.30:FF:000028">
    <property type="entry name" value="PH, RCC1 and FYVE domains-containing protein 1"/>
    <property type="match status" value="1"/>
</dbReference>
<dbReference type="FunFam" id="2.130.10.30:FF:000031">
    <property type="entry name" value="PH, RCC1 and FYVE domains-containing protein 1"/>
    <property type="match status" value="1"/>
</dbReference>
<dbReference type="FunFam" id="2.30.29.30:FF:000363">
    <property type="entry name" value="Putative E3 ubiquitin-protein ligase HERC1"/>
    <property type="match status" value="1"/>
</dbReference>
<dbReference type="FunFam" id="3.30.40.10:FF:000619">
    <property type="entry name" value="Putative E3 ubiquitin-protein ligase HERC1"/>
    <property type="match status" value="1"/>
</dbReference>
<dbReference type="Gene3D" id="2.30.29.30">
    <property type="entry name" value="Pleckstrin-homology domain (PH domain)/Phosphotyrosine-binding domain (PTB)"/>
    <property type="match status" value="1"/>
</dbReference>
<dbReference type="Gene3D" id="2.130.10.30">
    <property type="entry name" value="Regulator of chromosome condensation 1/beta-lactamase-inhibitor protein II"/>
    <property type="match status" value="2"/>
</dbReference>
<dbReference type="Gene3D" id="3.30.40.10">
    <property type="entry name" value="Zinc/RING finger domain, C3HC4 (zinc finger)"/>
    <property type="match status" value="1"/>
</dbReference>
<dbReference type="InterPro" id="IPR013591">
    <property type="entry name" value="Brevis_radix_dom"/>
</dbReference>
<dbReference type="InterPro" id="IPR027988">
    <property type="entry name" value="BRX_N"/>
</dbReference>
<dbReference type="InterPro" id="IPR011993">
    <property type="entry name" value="PH-like_dom_sf"/>
</dbReference>
<dbReference type="InterPro" id="IPR001849">
    <property type="entry name" value="PH_domain"/>
</dbReference>
<dbReference type="InterPro" id="IPR009091">
    <property type="entry name" value="RCC1/BLIP-II"/>
</dbReference>
<dbReference type="InterPro" id="IPR000408">
    <property type="entry name" value="Reg_chr_condens"/>
</dbReference>
<dbReference type="InterPro" id="IPR051210">
    <property type="entry name" value="Ub_ligase/GEF_domain"/>
</dbReference>
<dbReference type="InterPro" id="IPR000306">
    <property type="entry name" value="Znf_FYVE"/>
</dbReference>
<dbReference type="InterPro" id="IPR017455">
    <property type="entry name" value="Znf_FYVE-rel"/>
</dbReference>
<dbReference type="InterPro" id="IPR011011">
    <property type="entry name" value="Znf_FYVE_PHD"/>
</dbReference>
<dbReference type="InterPro" id="IPR013083">
    <property type="entry name" value="Znf_RING/FYVE/PHD"/>
</dbReference>
<dbReference type="PANTHER" id="PTHR22870:SF379">
    <property type="entry name" value="PH, RCC1 AND FYVE DOMAINS-CONTAINING PROTEIN 1"/>
    <property type="match status" value="1"/>
</dbReference>
<dbReference type="PANTHER" id="PTHR22870">
    <property type="entry name" value="REGULATOR OF CHROMOSOME CONDENSATION"/>
    <property type="match status" value="1"/>
</dbReference>
<dbReference type="Pfam" id="PF08381">
    <property type="entry name" value="BRX"/>
    <property type="match status" value="1"/>
</dbReference>
<dbReference type="Pfam" id="PF13713">
    <property type="entry name" value="BRX_N"/>
    <property type="match status" value="1"/>
</dbReference>
<dbReference type="Pfam" id="PF01363">
    <property type="entry name" value="FYVE"/>
    <property type="match status" value="1"/>
</dbReference>
<dbReference type="Pfam" id="PF16457">
    <property type="entry name" value="PH_12"/>
    <property type="match status" value="1"/>
</dbReference>
<dbReference type="Pfam" id="PF25390">
    <property type="entry name" value="WD40_RLD"/>
    <property type="match status" value="1"/>
</dbReference>
<dbReference type="PRINTS" id="PR00633">
    <property type="entry name" value="RCCNDNSATION"/>
</dbReference>
<dbReference type="SMART" id="SM00064">
    <property type="entry name" value="FYVE"/>
    <property type="match status" value="1"/>
</dbReference>
<dbReference type="SUPFAM" id="SSF57903">
    <property type="entry name" value="FYVE/PHD zinc finger"/>
    <property type="match status" value="1"/>
</dbReference>
<dbReference type="SUPFAM" id="SSF50729">
    <property type="entry name" value="PH domain-like"/>
    <property type="match status" value="1"/>
</dbReference>
<dbReference type="SUPFAM" id="SSF50985">
    <property type="entry name" value="RCC1/BLIP-II"/>
    <property type="match status" value="1"/>
</dbReference>
<dbReference type="PROSITE" id="PS51514">
    <property type="entry name" value="BRX"/>
    <property type="match status" value="1"/>
</dbReference>
<dbReference type="PROSITE" id="PS00626">
    <property type="entry name" value="RCC1_2"/>
    <property type="match status" value="3"/>
</dbReference>
<dbReference type="PROSITE" id="PS50012">
    <property type="entry name" value="RCC1_3"/>
    <property type="match status" value="7"/>
</dbReference>
<dbReference type="PROSITE" id="PS50178">
    <property type="entry name" value="ZF_FYVE"/>
    <property type="match status" value="1"/>
</dbReference>
<feature type="chain" id="PRO_0000441122" description="PH, RCC1 and FYVE domains-containing protein 1">
    <location>
        <begin position="1"/>
        <end position="1103"/>
    </location>
</feature>
<feature type="domain" description="PH" evidence="1">
    <location>
        <begin position="22"/>
        <end position="123"/>
    </location>
</feature>
<feature type="repeat" description="RCC1 1" evidence="1">
    <location>
        <begin position="237"/>
        <end position="298"/>
    </location>
</feature>
<feature type="repeat" description="RCC1 2" evidence="1">
    <location>
        <begin position="299"/>
        <end position="351"/>
    </location>
</feature>
<feature type="repeat" description="RCC1 3" evidence="1">
    <location>
        <begin position="353"/>
        <end position="406"/>
    </location>
</feature>
<feature type="repeat" description="RCC1 4" evidence="1">
    <location>
        <begin position="407"/>
        <end position="458"/>
    </location>
</feature>
<feature type="repeat" description="RCC1 5" evidence="1">
    <location>
        <begin position="471"/>
        <end position="522"/>
    </location>
</feature>
<feature type="repeat" description="RCC1 6" evidence="1">
    <location>
        <begin position="524"/>
        <end position="574"/>
    </location>
</feature>
<feature type="repeat" description="RCC1 7" evidence="1">
    <location>
        <begin position="575"/>
        <end position="626"/>
    </location>
</feature>
<feature type="domain" description="BRX" evidence="3">
    <location>
        <begin position="1023"/>
        <end position="1078"/>
    </location>
</feature>
<feature type="zinc finger region" description="FYVE-type" evidence="2">
    <location>
        <begin position="632"/>
        <end position="694"/>
    </location>
</feature>
<feature type="region of interest" description="Disordered" evidence="4">
    <location>
        <begin position="144"/>
        <end position="233"/>
    </location>
</feature>
<feature type="region of interest" description="Disordered" evidence="4">
    <location>
        <begin position="783"/>
        <end position="818"/>
    </location>
</feature>
<feature type="region of interest" description="Disordered" evidence="4">
    <location>
        <begin position="962"/>
        <end position="988"/>
    </location>
</feature>
<feature type="region of interest" description="Disordered" evidence="4">
    <location>
        <begin position="1079"/>
        <end position="1103"/>
    </location>
</feature>
<feature type="coiled-coil region" evidence="1">
    <location>
        <begin position="828"/>
        <end position="904"/>
    </location>
</feature>
<feature type="compositionally biased region" description="Low complexity" evidence="4">
    <location>
        <begin position="151"/>
        <end position="169"/>
    </location>
</feature>
<feature type="compositionally biased region" description="Low complexity" evidence="4">
    <location>
        <begin position="217"/>
        <end position="231"/>
    </location>
</feature>
<feature type="compositionally biased region" description="Low complexity" evidence="4">
    <location>
        <begin position="791"/>
        <end position="818"/>
    </location>
</feature>
<feature type="compositionally biased region" description="Polar residues" evidence="4">
    <location>
        <begin position="962"/>
        <end position="979"/>
    </location>
</feature>
<feature type="binding site" evidence="2">
    <location>
        <position position="638"/>
    </location>
    <ligand>
        <name>Zn(2+)</name>
        <dbReference type="ChEBI" id="CHEBI:29105"/>
        <label>1</label>
    </ligand>
</feature>
<feature type="binding site" evidence="2">
    <location>
        <position position="641"/>
    </location>
    <ligand>
        <name>Zn(2+)</name>
        <dbReference type="ChEBI" id="CHEBI:29105"/>
        <label>1</label>
    </ligand>
</feature>
<feature type="binding site" evidence="2">
    <location>
        <position position="654"/>
    </location>
    <ligand>
        <name>Zn(2+)</name>
        <dbReference type="ChEBI" id="CHEBI:29105"/>
        <label>2</label>
    </ligand>
</feature>
<feature type="binding site" evidence="2">
    <location>
        <position position="657"/>
    </location>
    <ligand>
        <name>Zn(2+)</name>
        <dbReference type="ChEBI" id="CHEBI:29105"/>
        <label>2</label>
    </ligand>
</feature>
<feature type="binding site" evidence="2">
    <location>
        <position position="662"/>
    </location>
    <ligand>
        <name>Zn(2+)</name>
        <dbReference type="ChEBI" id="CHEBI:29105"/>
        <label>1</label>
    </ligand>
</feature>
<feature type="binding site" evidence="2">
    <location>
        <position position="665"/>
    </location>
    <ligand>
        <name>Zn(2+)</name>
        <dbReference type="ChEBI" id="CHEBI:29105"/>
        <label>1</label>
    </ligand>
</feature>
<feature type="binding site" evidence="2">
    <location>
        <position position="686"/>
    </location>
    <ligand>
        <name>Zn(2+)</name>
        <dbReference type="ChEBI" id="CHEBI:29105"/>
        <label>2</label>
    </ligand>
</feature>
<feature type="binding site" evidence="2">
    <location>
        <position position="689"/>
    </location>
    <ligand>
        <name>Zn(2+)</name>
        <dbReference type="ChEBI" id="CHEBI:29105"/>
        <label>2</label>
    </ligand>
</feature>
<feature type="mutagenesis site" description="Increased affinity for PtdIns3P." evidence="5">
    <original>NCY</original>
    <variation>HCR</variation>
    <location>
        <begin position="653"/>
        <end position="655"/>
    </location>
</feature>
<feature type="sequence conflict" description="In Ref. 4; AAL58903/AAO11642." evidence="8" ref="4">
    <original>D</original>
    <variation>N</variation>
    <location>
        <position position="134"/>
    </location>
</feature>